<name>PG047_VACCC</name>
<evidence type="ECO:0000250" key="1">
    <source>
        <dbReference type="UniProtKB" id="P24357"/>
    </source>
</evidence>
<evidence type="ECO:0000255" key="2"/>
<evidence type="ECO:0000255" key="3">
    <source>
        <dbReference type="PROSITE-ProRule" id="PRU00037"/>
    </source>
</evidence>
<evidence type="ECO:0000305" key="4"/>
<gene>
    <name type="primary">OPG047</name>
    <name type="ORF">F3L</name>
</gene>
<organism>
    <name type="scientific">Vaccinia virus (strain Copenhagen)</name>
    <name type="common">VACV</name>
    <dbReference type="NCBI Taxonomy" id="10249"/>
    <lineage>
        <taxon>Viruses</taxon>
        <taxon>Varidnaviria</taxon>
        <taxon>Bamfordvirae</taxon>
        <taxon>Nucleocytoviricota</taxon>
        <taxon>Pokkesviricetes</taxon>
        <taxon>Chitovirales</taxon>
        <taxon>Poxviridae</taxon>
        <taxon>Chordopoxvirinae</taxon>
        <taxon>Orthopoxvirus</taxon>
        <taxon>Vaccinia virus</taxon>
    </lineage>
</organism>
<reference key="1">
    <citation type="journal article" date="1990" name="Virology">
        <title>The complete DNA sequence of vaccinia virus.</title>
        <authorList>
            <person name="Goebel S.J."/>
            <person name="Johnson G.P."/>
            <person name="Perkus M.E."/>
            <person name="Davis S.W."/>
            <person name="Winslow J.P."/>
            <person name="Paoletti E."/>
        </authorList>
    </citation>
    <scope>NUCLEOTIDE SEQUENCE [LARGE SCALE GENOMIC DNA]</scope>
</reference>
<reference key="2">
    <citation type="journal article" date="1990" name="Virology">
        <title>Appendix to 'The complete DNA sequence of vaccinia virus'.</title>
        <authorList>
            <person name="Goebel S.J."/>
            <person name="Johnson G.P."/>
            <person name="Perkus M.E."/>
            <person name="Davis S.W."/>
            <person name="Winslow J.P."/>
            <person name="Paoletti E."/>
        </authorList>
    </citation>
    <scope>NUCLEOTIDE SEQUENCE [LARGE SCALE GENOMIC DNA]</scope>
</reference>
<sequence>MPIFVNTVYCKNILALSMTKKFKTIIDAIGGNIIVNSTILKKLSPYFRTHLRQKYTKNKDPVTRVCLDLDIHSLTSIVIYSYTGKVYIDSHNVVNLLRASILTSVEFIIYTCINFILRDFRKEYCVECYMMGIEYGLSNLLCHTKNFIAKHFLELEDDIIDNFDYLSMKLILESDELNVPDEDYVVDFVIKWYIKRRNKLGNLLLLIKNVIRSNYLSPRGINNVKWILDCTKIFHCDKQPRKSYKYPFIEYPMNMDQIIDIFHMCTSTHVGEVVYLIGGWMNNEIHNNAIAVNYISNNWIPIPPMNSPRLYATGIPANNKLYVVGGLPNPTSVERWFHGDAAWVNMPSLLKPRCNPAVASINNVIYVMGGHSETDTTTEYLLPNHDQWQFGPSTYYPHYKSCALVFGRRLFLVGRNAEFYCESSNTWTLIDDPIYPRDNPELIIVDNKLLLIGGFYRGSYIDTIEVYNHHTYSWNIWDGK</sequence>
<protein>
    <recommendedName>
        <fullName>Immune evasion protein OPG047</fullName>
    </recommendedName>
    <alternativeName>
        <fullName>Kelch repeat protein</fullName>
    </alternativeName>
</protein>
<keyword id="KW-0880">Kelch repeat</keyword>
<keyword id="KW-1185">Reference proteome</keyword>
<keyword id="KW-0677">Repeat</keyword>
<feature type="chain" id="PRO_0000119166" description="Immune evasion protein OPG047">
    <location>
        <begin position="1"/>
        <end position="480"/>
    </location>
</feature>
<feature type="domain" description="BTB" evidence="3">
    <location>
        <begin position="10"/>
        <end position="90"/>
    </location>
</feature>
<feature type="domain" description="BACK" evidence="2">
    <location>
        <begin position="125"/>
        <end position="223"/>
    </location>
</feature>
<feature type="repeat" description="Kelch 1" evidence="2">
    <location>
        <begin position="273"/>
        <end position="319"/>
    </location>
</feature>
<feature type="repeat" description="Kelch 2" evidence="2">
    <location>
        <begin position="320"/>
        <end position="363"/>
    </location>
</feature>
<feature type="repeat" description="Kelch 3" evidence="2">
    <location>
        <begin position="365"/>
        <end position="408"/>
    </location>
</feature>
<feature type="repeat" description="Kelch 4" evidence="2">
    <location>
        <begin position="410"/>
        <end position="447"/>
    </location>
</feature>
<feature type="repeat" description="Kelch 5" evidence="2">
    <location>
        <begin position="448"/>
        <end position="480"/>
    </location>
</feature>
<comment type="function">
    <text evidence="1">Might have a role in the suppression of host immune response.</text>
</comment>
<comment type="induction">
    <text evidence="1">Expressed in the early phase of the viral replicative cycle.</text>
</comment>
<comment type="similarity">
    <text evidence="4">Belongs to the orthopoxvirus OPG047 family.</text>
</comment>
<accession>P21013</accession>
<organismHost>
    <name type="scientific">Homo sapiens</name>
    <name type="common">Human</name>
    <dbReference type="NCBI Taxonomy" id="9606"/>
</organismHost>
<dbReference type="EMBL" id="M35027">
    <property type="protein sequence ID" value="AAA48016.1"/>
    <property type="molecule type" value="Genomic_DNA"/>
</dbReference>
<dbReference type="PIR" id="H42506">
    <property type="entry name" value="H42506"/>
</dbReference>
<dbReference type="SMR" id="P21013"/>
<dbReference type="Proteomes" id="UP000008269">
    <property type="component" value="Segment"/>
</dbReference>
<dbReference type="Gene3D" id="1.25.40.420">
    <property type="match status" value="1"/>
</dbReference>
<dbReference type="Gene3D" id="2.120.10.80">
    <property type="entry name" value="Kelch-type beta propeller"/>
    <property type="match status" value="1"/>
</dbReference>
<dbReference type="Gene3D" id="3.30.710.10">
    <property type="entry name" value="Potassium Channel Kv1.1, Chain A"/>
    <property type="match status" value="1"/>
</dbReference>
<dbReference type="InterPro" id="IPR011705">
    <property type="entry name" value="BACK"/>
</dbReference>
<dbReference type="InterPro" id="IPR000210">
    <property type="entry name" value="BTB/POZ_dom"/>
</dbReference>
<dbReference type="InterPro" id="IPR015915">
    <property type="entry name" value="Kelch-typ_b-propeller"/>
</dbReference>
<dbReference type="InterPro" id="IPR006652">
    <property type="entry name" value="Kelch_1"/>
</dbReference>
<dbReference type="InterPro" id="IPR011333">
    <property type="entry name" value="SKP1/BTB/POZ_sf"/>
</dbReference>
<dbReference type="PANTHER" id="PTHR24412">
    <property type="entry name" value="KELCH PROTEIN"/>
    <property type="match status" value="1"/>
</dbReference>
<dbReference type="PANTHER" id="PTHR24412:SF489">
    <property type="entry name" value="RING FINGER DOMAIN AND KELCH REPEAT-CONTAINING PROTEIN DDB_G0271372"/>
    <property type="match status" value="1"/>
</dbReference>
<dbReference type="Pfam" id="PF07707">
    <property type="entry name" value="BACK"/>
    <property type="match status" value="1"/>
</dbReference>
<dbReference type="Pfam" id="PF00651">
    <property type="entry name" value="BTB"/>
    <property type="match status" value="1"/>
</dbReference>
<dbReference type="Pfam" id="PF01344">
    <property type="entry name" value="Kelch_1"/>
    <property type="match status" value="3"/>
</dbReference>
<dbReference type="PRINTS" id="PR00501">
    <property type="entry name" value="KELCHREPEAT"/>
</dbReference>
<dbReference type="SMART" id="SM00875">
    <property type="entry name" value="BACK"/>
    <property type="match status" value="1"/>
</dbReference>
<dbReference type="SMART" id="SM00612">
    <property type="entry name" value="Kelch"/>
    <property type="match status" value="3"/>
</dbReference>
<dbReference type="SUPFAM" id="SSF117281">
    <property type="entry name" value="Kelch motif"/>
    <property type="match status" value="1"/>
</dbReference>
<dbReference type="SUPFAM" id="SSF54695">
    <property type="entry name" value="POZ domain"/>
    <property type="match status" value="1"/>
</dbReference>
<dbReference type="PROSITE" id="PS50097">
    <property type="entry name" value="BTB"/>
    <property type="match status" value="1"/>
</dbReference>
<proteinExistence type="inferred from homology"/>